<comment type="function">
    <text>Probably involved in transcriptional regulation.</text>
</comment>
<comment type="subcellular location">
    <subcellularLocation>
        <location evidence="1">Nucleus</location>
    </subcellularLocation>
</comment>
<comment type="similarity">
    <text evidence="3">Belongs to the TADA1 family.</text>
</comment>
<feature type="chain" id="PRO_0000316019" description="Transcriptional adapter 1">
    <location>
        <begin position="1"/>
        <end position="332"/>
    </location>
</feature>
<feature type="region of interest" description="Disordered" evidence="2">
    <location>
        <begin position="79"/>
        <end position="106"/>
    </location>
</feature>
<feature type="compositionally biased region" description="Basic residues" evidence="2">
    <location>
        <begin position="95"/>
        <end position="104"/>
    </location>
</feature>
<proteinExistence type="evidence at transcript level"/>
<keyword id="KW-0539">Nucleus</keyword>
<keyword id="KW-1185">Reference proteome</keyword>
<keyword id="KW-0804">Transcription</keyword>
<keyword id="KW-0805">Transcription regulation</keyword>
<accession>Q6NWA8</accession>
<evidence type="ECO:0000250" key="1"/>
<evidence type="ECO:0000256" key="2">
    <source>
        <dbReference type="SAM" id="MobiDB-lite"/>
    </source>
</evidence>
<evidence type="ECO:0000305" key="3"/>
<reference key="1">
    <citation type="journal article" date="2004" name="Proc. Natl. Acad. Sci. U.S.A.">
        <title>Hematopoietic gene expression profile in zebrafish kidney marrow.</title>
        <authorList>
            <person name="Song H.-D."/>
            <person name="Sun X.-J."/>
            <person name="Deng M."/>
            <person name="Zhang G.-W."/>
            <person name="Zhou Y."/>
            <person name="Wu X.-Y."/>
            <person name="Sheng Y."/>
            <person name="Chen Y."/>
            <person name="Ruan Z."/>
            <person name="Jiang C.-L."/>
            <person name="Fan H.-Y."/>
            <person name="Zon L.I."/>
            <person name="Kanki J.P."/>
            <person name="Liu T.X."/>
            <person name="Look A.T."/>
            <person name="Chen Z."/>
        </authorList>
    </citation>
    <scope>NUCLEOTIDE SEQUENCE [LARGE SCALE MRNA]</scope>
    <source>
        <tissue>Kidney marrow</tissue>
    </source>
</reference>
<reference key="2">
    <citation type="submission" date="2004-03" db="EMBL/GenBank/DDBJ databases">
        <authorList>
            <consortium name="NIH - Zebrafish Gene Collection (ZGC) project"/>
        </authorList>
    </citation>
    <scope>NUCLEOTIDE SEQUENCE [LARGE SCALE MRNA]</scope>
    <source>
        <tissue>Embryo</tissue>
    </source>
</reference>
<sequence length="332" mass="36961">MAAHASELEIAKKNLTDAIGENVKHYWANLKLWFKQKISKEEFDLEARRLLAQDNVHVHNDFLLAILTRCQIIVSTSEGPGSLQWSGGSASKPGKPSRGKKKFPSVRQKFDHRFQPQNPLAGVPVFSPREAEEEELKLSAQTLLLPSRGQLEARMMVSAFESDLDSVAEDAVSCMLCALQVHLKDILTALVSRRKAYRLRDGHFLYAFGSDVTPRPYLKNSLPAYHSATECPPASASLPAAAPARVCPDEAEQNAALLLACSADTAAPPLQPVSVYDLLEALQVQRRVMPSHSMYALNMERILARLWHPSHEELEQDHIHRQHLALRDGLVT</sequence>
<organism>
    <name type="scientific">Danio rerio</name>
    <name type="common">Zebrafish</name>
    <name type="synonym">Brachydanio rerio</name>
    <dbReference type="NCBI Taxonomy" id="7955"/>
    <lineage>
        <taxon>Eukaryota</taxon>
        <taxon>Metazoa</taxon>
        <taxon>Chordata</taxon>
        <taxon>Craniata</taxon>
        <taxon>Vertebrata</taxon>
        <taxon>Euteleostomi</taxon>
        <taxon>Actinopterygii</taxon>
        <taxon>Neopterygii</taxon>
        <taxon>Teleostei</taxon>
        <taxon>Ostariophysi</taxon>
        <taxon>Cypriniformes</taxon>
        <taxon>Danionidae</taxon>
        <taxon>Danioninae</taxon>
        <taxon>Danio</taxon>
    </lineage>
</organism>
<name>TADA1_DANRE</name>
<dbReference type="EMBL" id="AY423005">
    <property type="protein sequence ID" value="AAQ97981.1"/>
    <property type="molecule type" value="mRNA"/>
</dbReference>
<dbReference type="EMBL" id="BC067660">
    <property type="protein sequence ID" value="AAH67660.1"/>
    <property type="molecule type" value="mRNA"/>
</dbReference>
<dbReference type="EMBL" id="BC153454">
    <property type="protein sequence ID" value="AAI53455.1"/>
    <property type="molecule type" value="mRNA"/>
</dbReference>
<dbReference type="RefSeq" id="NP_991169.1">
    <property type="nucleotide sequence ID" value="NM_205606.2"/>
</dbReference>
<dbReference type="SMR" id="Q6NWA8"/>
<dbReference type="FunCoup" id="Q6NWA8">
    <property type="interactions" value="1150"/>
</dbReference>
<dbReference type="STRING" id="7955.ENSDARP00000135265"/>
<dbReference type="GeneID" id="402899"/>
<dbReference type="KEGG" id="dre:402899"/>
<dbReference type="AGR" id="ZFIN:ZDB-GENE-040426-58"/>
<dbReference type="CTD" id="117143"/>
<dbReference type="ZFIN" id="ZDB-GENE-040426-58">
    <property type="gene designation" value="tada1"/>
</dbReference>
<dbReference type="InParanoid" id="Q6NWA8"/>
<dbReference type="OrthoDB" id="10264870at2759"/>
<dbReference type="PhylomeDB" id="Q6NWA8"/>
<dbReference type="PRO" id="PR:Q6NWA8"/>
<dbReference type="Proteomes" id="UP000000437">
    <property type="component" value="Chromosome 2"/>
</dbReference>
<dbReference type="GO" id="GO:0005634">
    <property type="term" value="C:nucleus"/>
    <property type="evidence" value="ECO:0007669"/>
    <property type="project" value="UniProtKB-SubCell"/>
</dbReference>
<dbReference type="GO" id="GO:0000124">
    <property type="term" value="C:SAGA complex"/>
    <property type="evidence" value="ECO:0000318"/>
    <property type="project" value="GO_Central"/>
</dbReference>
<dbReference type="GO" id="GO:0003713">
    <property type="term" value="F:transcription coactivator activity"/>
    <property type="evidence" value="ECO:0000318"/>
    <property type="project" value="GO_Central"/>
</dbReference>
<dbReference type="GO" id="GO:0006357">
    <property type="term" value="P:regulation of transcription by RNA polymerase II"/>
    <property type="evidence" value="ECO:0000318"/>
    <property type="project" value="GO_Central"/>
</dbReference>
<dbReference type="CDD" id="cd22934">
    <property type="entry name" value="HFD_TADA1"/>
    <property type="match status" value="1"/>
</dbReference>
<dbReference type="InterPro" id="IPR024738">
    <property type="entry name" value="Hfi1/Tada1"/>
</dbReference>
<dbReference type="PANTHER" id="PTHR21277">
    <property type="entry name" value="TRANSCRIPTIONAL ADAPTER 1"/>
    <property type="match status" value="1"/>
</dbReference>
<dbReference type="PANTHER" id="PTHR21277:SF5">
    <property type="entry name" value="TRANSCRIPTIONAL ADAPTER 1"/>
    <property type="match status" value="1"/>
</dbReference>
<dbReference type="Pfam" id="PF12767">
    <property type="entry name" value="SAGA-Tad1"/>
    <property type="match status" value="1"/>
</dbReference>
<gene>
    <name type="primary">tada1</name>
    <name type="synonym">tada1l</name>
    <name type="ORF">zgc:85851</name>
</gene>
<protein>
    <recommendedName>
        <fullName>Transcriptional adapter 1</fullName>
    </recommendedName>
    <alternativeName>
        <fullName>Transcriptional adapter 1-like protein</fullName>
    </alternativeName>
</protein>